<feature type="transit peptide" description="Mitochondrion" evidence="2">
    <location>
        <begin position="1"/>
        <end status="unknown"/>
    </location>
</feature>
<feature type="chain" id="PRO_0000405516" description="Mitochondrial zinc maintenance protein 1, mitochondrial">
    <location>
        <begin status="unknown"/>
        <end position="111"/>
    </location>
</feature>
<dbReference type="EMBL" id="CABT02000004">
    <property type="protein sequence ID" value="CCC07644.1"/>
    <property type="molecule type" value="Genomic_DNA"/>
</dbReference>
<dbReference type="RefSeq" id="XP_003352377.1">
    <property type="nucleotide sequence ID" value="XM_003352329.1"/>
</dbReference>
<dbReference type="SMR" id="D1Z4E1"/>
<dbReference type="FunCoup" id="D1Z4E1">
    <property type="interactions" value="12"/>
</dbReference>
<dbReference type="STRING" id="771870.D1Z4E1"/>
<dbReference type="GeneID" id="10810016"/>
<dbReference type="KEGG" id="smp:10810016"/>
<dbReference type="VEuPathDB" id="FungiDB:SMAC_01212"/>
<dbReference type="eggNOG" id="ENOG502S6EF">
    <property type="taxonomic scope" value="Eukaryota"/>
</dbReference>
<dbReference type="HOGENOM" id="CLU_147114_2_2_1"/>
<dbReference type="InParanoid" id="D1Z4E1"/>
<dbReference type="OMA" id="KYKLRIH"/>
<dbReference type="OrthoDB" id="529194at2759"/>
<dbReference type="Proteomes" id="UP000001881">
    <property type="component" value="Unassembled WGS sequence"/>
</dbReference>
<dbReference type="GO" id="GO:0005759">
    <property type="term" value="C:mitochondrial matrix"/>
    <property type="evidence" value="ECO:0007669"/>
    <property type="project" value="UniProtKB-SubCell"/>
</dbReference>
<dbReference type="GO" id="GO:0044183">
    <property type="term" value="F:protein folding chaperone"/>
    <property type="evidence" value="ECO:0007669"/>
    <property type="project" value="TreeGrafter"/>
</dbReference>
<dbReference type="GO" id="GO:0034551">
    <property type="term" value="P:mitochondrial respiratory chain complex III assembly"/>
    <property type="evidence" value="ECO:0007669"/>
    <property type="project" value="InterPro"/>
</dbReference>
<dbReference type="CDD" id="cd20267">
    <property type="entry name" value="Complex1_LYR_LYRM7"/>
    <property type="match status" value="1"/>
</dbReference>
<dbReference type="InterPro" id="IPR045298">
    <property type="entry name" value="Complex1_LYR_LYRM7"/>
</dbReference>
<dbReference type="InterPro" id="IPR050435">
    <property type="entry name" value="MZM1/LYRM7"/>
</dbReference>
<dbReference type="PANTHER" id="PTHR46749">
    <property type="entry name" value="COMPLEX III ASSEMBLY FACTOR LYRM7"/>
    <property type="match status" value="1"/>
</dbReference>
<dbReference type="PANTHER" id="PTHR46749:SF1">
    <property type="entry name" value="COMPLEX III ASSEMBLY FACTOR LYRM7"/>
    <property type="match status" value="1"/>
</dbReference>
<protein>
    <recommendedName>
        <fullName>Mitochondrial zinc maintenance protein 1, mitochondrial</fullName>
    </recommendedName>
</protein>
<proteinExistence type="inferred from homology"/>
<sequence length="111" mass="12251">MSALHAYRHLMRAARVAFDGDARTLTAAYESISRGFRENQNLPANDPTIAPAIAHAEEVASFLRSNVVQGRKDGETYKLRIHKDTERGDNDTIKLGNQNIKIGGEHKCCSA</sequence>
<organism>
    <name type="scientific">Sordaria macrospora (strain ATCC MYA-333 / DSM 997 / K(L3346) / K-hell)</name>
    <dbReference type="NCBI Taxonomy" id="771870"/>
    <lineage>
        <taxon>Eukaryota</taxon>
        <taxon>Fungi</taxon>
        <taxon>Dikarya</taxon>
        <taxon>Ascomycota</taxon>
        <taxon>Pezizomycotina</taxon>
        <taxon>Sordariomycetes</taxon>
        <taxon>Sordariomycetidae</taxon>
        <taxon>Sordariales</taxon>
        <taxon>Sordariaceae</taxon>
        <taxon>Sordaria</taxon>
    </lineage>
</organism>
<name>MZM1_SORMK</name>
<keyword id="KW-0143">Chaperone</keyword>
<keyword id="KW-0496">Mitochondrion</keyword>
<keyword id="KW-1185">Reference proteome</keyword>
<keyword id="KW-0809">Transit peptide</keyword>
<evidence type="ECO:0000250" key="1"/>
<evidence type="ECO:0000255" key="2"/>
<evidence type="ECO:0000305" key="3"/>
<gene>
    <name type="primary">MZM1</name>
    <name type="ORF">SMAC_01212</name>
</gene>
<comment type="function">
    <text evidence="1">Assembly factor required for Rieske Fe-S protein RIP1 incorporation into the cytochrome b-c1 (CIII) complex. Functions as a chaperone, binding to this subunit within the mitochondrial matrix and stabilizing it prior to its translocation and insertion into the late CIII dimeric intermediate within the mitochondrial inner membrane. Modulates the mitochondrial matrix zinc pool (By similarity).</text>
</comment>
<comment type="subunit">
    <text evidence="1">Interacts with RIP1.</text>
</comment>
<comment type="subcellular location">
    <subcellularLocation>
        <location evidence="1">Mitochondrion matrix</location>
    </subcellularLocation>
</comment>
<comment type="similarity">
    <text evidence="3">Belongs to the complex I LYR family. MZM1 subfamily.</text>
</comment>
<accession>D1Z4E1</accession>
<accession>F7VQ62</accession>
<reference key="1">
    <citation type="journal article" date="2010" name="PLoS Genet.">
        <title>De novo assembly of a 40 Mb eukaryotic genome from short sequence reads: Sordaria macrospora, a model organism for fungal morphogenesis.</title>
        <authorList>
            <person name="Nowrousian M."/>
            <person name="Stajich J.E."/>
            <person name="Chu M."/>
            <person name="Engh I."/>
            <person name="Espagne E."/>
            <person name="Halliday K."/>
            <person name="Kamerewerd J."/>
            <person name="Kempken F."/>
            <person name="Knab B."/>
            <person name="Kuo H.-C."/>
            <person name="Osiewacz H.D."/>
            <person name="Poeggeler S."/>
            <person name="Read N.D."/>
            <person name="Seiler S."/>
            <person name="Smith K.M."/>
            <person name="Zickler D."/>
            <person name="Kueck U."/>
            <person name="Freitag M."/>
        </authorList>
    </citation>
    <scope>NUCLEOTIDE SEQUENCE [LARGE SCALE GENOMIC DNA]</scope>
    <source>
        <strain>ATCC MYA-333 / DSM 997 / K(L3346) / K-hell</strain>
    </source>
</reference>